<proteinExistence type="evidence at protein level"/>
<protein>
    <recommendedName>
        <fullName evidence="5">Conorfamide-Sr1</fullName>
        <shortName evidence="1">CNF-Sr1</shortName>
    </recommendedName>
    <alternativeName>
        <fullName evidence="4">Cono-RFamide-Sr1</fullName>
    </alternativeName>
</protein>
<accession>P58805</accession>
<name>CRFA1_CONSP</name>
<reference key="1">
    <citation type="journal article" date="2002" name="Toxicon">
        <title>Conorfamide, a Conus venom peptide belonging to the RFamide family of neuropeptides.</title>
        <authorList>
            <person name="Maillo M."/>
            <person name="Aguilar M.B."/>
            <person name="Lopez-Vera E."/>
            <person name="Craig A.G."/>
            <person name="Bulaj G."/>
            <person name="Olivera B.M."/>
            <person name="Heimer de la Cotera E.P."/>
        </authorList>
    </citation>
    <scope>PROTEIN SEQUENCE</scope>
    <scope>SYNTHESIS</scope>
    <scope>FUNCTION</scope>
    <scope>BIOASSAY</scope>
    <scope>MASS SPECTROMETRY</scope>
    <scope>AMIDATION AT PHE-12</scope>
    <scope>SUBCELLULAR LOCATION</scope>
    <source>
        <tissue>Venom</tissue>
    </source>
</reference>
<reference key="2">
    <citation type="journal article" date="2018" name="Toxicon">
        <title>Conopeptides promote itch through human itch receptor hMgprX1.</title>
        <authorList>
            <person name="Espino S.S."/>
            <person name="Robinson S.D."/>
            <person name="Safavi-Hemami H."/>
            <person name="Gajewiak J."/>
            <person name="Yang W."/>
            <person name="Olivera B.M."/>
            <person name="Liu Q."/>
        </authorList>
    </citation>
    <scope>FUNCTION</scope>
    <scope>SYNTHESIS</scope>
</reference>
<evidence type="ECO:0000250" key="1">
    <source>
        <dbReference type="UniProtKB" id="P0DOZ7"/>
    </source>
</evidence>
<evidence type="ECO:0000269" key="2">
    <source>
    </source>
</evidence>
<evidence type="ECO:0000269" key="3">
    <source>
    </source>
</evidence>
<evidence type="ECO:0000303" key="4">
    <source>
    </source>
</evidence>
<evidence type="ECO:0000305" key="5"/>
<evidence type="ECO:0000305" key="6">
    <source>
    </source>
</evidence>
<comment type="function">
    <text evidence="2 3">This peptide activates mouse sensory neuron-specific G-protein coupled receptors MRGPRX1, but not human receptors (PubMed:30243794). In vivo, causes hyperactivity in mice when injected intracranially (PubMed:11738233).</text>
</comment>
<comment type="subcellular location">
    <subcellularLocation>
        <location evidence="2">Secreted</location>
    </subcellularLocation>
</comment>
<comment type="tissue specificity">
    <text evidence="6">Expressed by the venom duct.</text>
</comment>
<comment type="mass spectrometry" mass="1454.8" method="Electrospray" evidence="2"/>
<comment type="miscellaneous">
    <text evidence="5">The mature peptide does not contain cysteine residue.</text>
</comment>
<comment type="similarity">
    <text evidence="5">Belongs to the FARP (FMRFamide related peptide) family.</text>
</comment>
<organism>
    <name type="scientific">Conus spurius</name>
    <name type="common">Alphabet cone</name>
    <dbReference type="NCBI Taxonomy" id="192919"/>
    <lineage>
        <taxon>Eukaryota</taxon>
        <taxon>Metazoa</taxon>
        <taxon>Spiralia</taxon>
        <taxon>Lophotrochozoa</taxon>
        <taxon>Mollusca</taxon>
        <taxon>Gastropoda</taxon>
        <taxon>Caenogastropoda</taxon>
        <taxon>Neogastropoda</taxon>
        <taxon>Conoidea</taxon>
        <taxon>Conidae</taxon>
        <taxon>Conus</taxon>
        <taxon>Lindaconus</taxon>
    </lineage>
</organism>
<sequence length="12" mass="1456">GPMGWVPVFYRF</sequence>
<dbReference type="ConoServer" id="1317">
    <property type="toxin name" value="Conorfamide-Sr1"/>
</dbReference>
<dbReference type="GO" id="GO:0005576">
    <property type="term" value="C:extracellular region"/>
    <property type="evidence" value="ECO:0007669"/>
    <property type="project" value="UniProtKB-SubCell"/>
</dbReference>
<dbReference type="GO" id="GO:0090729">
    <property type="term" value="F:toxin activity"/>
    <property type="evidence" value="ECO:0007669"/>
    <property type="project" value="UniProtKB-KW"/>
</dbReference>
<keyword id="KW-0027">Amidation</keyword>
<keyword id="KW-0903">Direct protein sequencing</keyword>
<keyword id="KW-1213">G-protein coupled receptor impairing toxin</keyword>
<keyword id="KW-0528">Neurotoxin</keyword>
<keyword id="KW-0964">Secreted</keyword>
<keyword id="KW-0800">Toxin</keyword>
<feature type="peptide" id="PRO_0000043716" description="Conorfamide-Sr1" evidence="2">
    <location>
        <begin position="1"/>
        <end position="12"/>
    </location>
</feature>
<feature type="modified residue" description="Phenylalanine amide" evidence="2">
    <location>
        <position position="12"/>
    </location>
</feature>